<feature type="signal peptide">
    <location>
        <begin position="1"/>
        <end position="21"/>
    </location>
</feature>
<feature type="propeptide" id="PRO_0000032093">
    <location>
        <begin position="22"/>
        <end position="37"/>
    </location>
</feature>
<feature type="chain" id="PRO_0000032094" description="2S seed storage protein 2 small subunit" evidence="1">
    <location>
        <begin position="38"/>
        <end position="72"/>
    </location>
</feature>
<feature type="propeptide" id="PRO_0000032095">
    <location>
        <begin position="73"/>
        <end position="88"/>
    </location>
</feature>
<feature type="chain" id="PRO_0000032096" description="2S seed storage protein 2 large subunit" evidence="1">
    <location>
        <begin position="89"/>
        <end position="170"/>
    </location>
</feature>
<protein>
    <recommendedName>
        <fullName>2S seed storage protein 2</fullName>
    </recommendedName>
    <alternativeName>
        <fullName>2S albumin storage protein</fullName>
    </alternativeName>
    <alternativeName>
        <fullName>NWMU2-2S albumin 2</fullName>
    </alternativeName>
    <component>
        <recommendedName>
            <fullName>2S seed storage protein 2 small subunit</fullName>
        </recommendedName>
    </component>
    <component>
        <recommendedName>
            <fullName>2S seed storage protein 2 large subunit</fullName>
        </recommendedName>
    </component>
</protein>
<accession>P15458</accession>
<gene>
    <name type="primary">AT2S2</name>
    <name type="ordered locus">At4g27150</name>
    <name type="ORF">T24A18.100</name>
</gene>
<reference key="1">
    <citation type="journal article" date="1988" name="Plant Physiol.">
        <title>Determination of the processing sites of an Arabidopsis 2S albumin and characterization of the complete gene family.</title>
        <authorList>
            <person name="Krebbers E."/>
            <person name="Herdies L."/>
            <person name="de Clercq A."/>
            <person name="Seurinck J."/>
            <person name="Leemans J."/>
            <person name="van Damme J."/>
            <person name="Segura M."/>
            <person name="Gheysen G."/>
            <person name="van Montagu M."/>
            <person name="Vandekerckhove J."/>
        </authorList>
    </citation>
    <scope>NUCLEOTIDE SEQUENCE [GENOMIC DNA]</scope>
    <source>
        <strain>cv. C24</strain>
    </source>
</reference>
<reference key="2">
    <citation type="journal article" date="1994" name="Plant J.">
        <title>A cotyledon regulatory region is responsible for the different spatial expression patterns of Arabidopsis 2S albumin genes.</title>
        <authorList>
            <person name="da Silva Conceicao A."/>
            <person name="Krebbers E."/>
        </authorList>
    </citation>
    <scope>NUCLEOTIDE SEQUENCE [GENOMIC DNA]</scope>
    <source>
        <strain>cv. C24</strain>
    </source>
</reference>
<reference key="3">
    <citation type="journal article" date="1999" name="Nature">
        <title>Sequence and analysis of chromosome 4 of the plant Arabidopsis thaliana.</title>
        <authorList>
            <person name="Mayer K.F.X."/>
            <person name="Schueller C."/>
            <person name="Wambutt R."/>
            <person name="Murphy G."/>
            <person name="Volckaert G."/>
            <person name="Pohl T."/>
            <person name="Duesterhoeft A."/>
            <person name="Stiekema W."/>
            <person name="Entian K.-D."/>
            <person name="Terryn N."/>
            <person name="Harris B."/>
            <person name="Ansorge W."/>
            <person name="Brandt P."/>
            <person name="Grivell L.A."/>
            <person name="Rieger M."/>
            <person name="Weichselgartner M."/>
            <person name="de Simone V."/>
            <person name="Obermaier B."/>
            <person name="Mache R."/>
            <person name="Mueller M."/>
            <person name="Kreis M."/>
            <person name="Delseny M."/>
            <person name="Puigdomenech P."/>
            <person name="Watson M."/>
            <person name="Schmidtheini T."/>
            <person name="Reichert B."/>
            <person name="Portetelle D."/>
            <person name="Perez-Alonso M."/>
            <person name="Boutry M."/>
            <person name="Bancroft I."/>
            <person name="Vos P."/>
            <person name="Hoheisel J."/>
            <person name="Zimmermann W."/>
            <person name="Wedler H."/>
            <person name="Ridley P."/>
            <person name="Langham S.-A."/>
            <person name="McCullagh B."/>
            <person name="Bilham L."/>
            <person name="Robben J."/>
            <person name="van der Schueren J."/>
            <person name="Grymonprez B."/>
            <person name="Chuang Y.-J."/>
            <person name="Vandenbussche F."/>
            <person name="Braeken M."/>
            <person name="Weltjens I."/>
            <person name="Voet M."/>
            <person name="Bastiaens I."/>
            <person name="Aert R."/>
            <person name="Defoor E."/>
            <person name="Weitzenegger T."/>
            <person name="Bothe G."/>
            <person name="Ramsperger U."/>
            <person name="Hilbert H."/>
            <person name="Braun M."/>
            <person name="Holzer E."/>
            <person name="Brandt A."/>
            <person name="Peters S."/>
            <person name="van Staveren M."/>
            <person name="Dirkse W."/>
            <person name="Mooijman P."/>
            <person name="Klein Lankhorst R."/>
            <person name="Rose M."/>
            <person name="Hauf J."/>
            <person name="Koetter P."/>
            <person name="Berneiser S."/>
            <person name="Hempel S."/>
            <person name="Feldpausch M."/>
            <person name="Lamberth S."/>
            <person name="Van den Daele H."/>
            <person name="De Keyser A."/>
            <person name="Buysshaert C."/>
            <person name="Gielen J."/>
            <person name="Villarroel R."/>
            <person name="De Clercq R."/>
            <person name="van Montagu M."/>
            <person name="Rogers J."/>
            <person name="Cronin A."/>
            <person name="Quail M.A."/>
            <person name="Bray-Allen S."/>
            <person name="Clark L."/>
            <person name="Doggett J."/>
            <person name="Hall S."/>
            <person name="Kay M."/>
            <person name="Lennard N."/>
            <person name="McLay K."/>
            <person name="Mayes R."/>
            <person name="Pettett A."/>
            <person name="Rajandream M.A."/>
            <person name="Lyne M."/>
            <person name="Benes V."/>
            <person name="Rechmann S."/>
            <person name="Borkova D."/>
            <person name="Bloecker H."/>
            <person name="Scharfe M."/>
            <person name="Grimm M."/>
            <person name="Loehnert T.-H."/>
            <person name="Dose S."/>
            <person name="de Haan M."/>
            <person name="Maarse A.C."/>
            <person name="Schaefer M."/>
            <person name="Mueller-Auer S."/>
            <person name="Gabel C."/>
            <person name="Fuchs M."/>
            <person name="Fartmann B."/>
            <person name="Granderath K."/>
            <person name="Dauner D."/>
            <person name="Herzl A."/>
            <person name="Neumann S."/>
            <person name="Argiriou A."/>
            <person name="Vitale D."/>
            <person name="Liguori R."/>
            <person name="Piravandi E."/>
            <person name="Massenet O."/>
            <person name="Quigley F."/>
            <person name="Clabauld G."/>
            <person name="Muendlein A."/>
            <person name="Felber R."/>
            <person name="Schnabl S."/>
            <person name="Hiller R."/>
            <person name="Schmidt W."/>
            <person name="Lecharny A."/>
            <person name="Aubourg S."/>
            <person name="Chefdor F."/>
            <person name="Cooke R."/>
            <person name="Berger C."/>
            <person name="Monfort A."/>
            <person name="Casacuberta E."/>
            <person name="Gibbons T."/>
            <person name="Weber N."/>
            <person name="Vandenbol M."/>
            <person name="Bargues M."/>
            <person name="Terol J."/>
            <person name="Torres A."/>
            <person name="Perez-Perez A."/>
            <person name="Purnelle B."/>
            <person name="Bent E."/>
            <person name="Johnson S."/>
            <person name="Tacon D."/>
            <person name="Jesse T."/>
            <person name="Heijnen L."/>
            <person name="Schwarz S."/>
            <person name="Scholler P."/>
            <person name="Heber S."/>
            <person name="Francs P."/>
            <person name="Bielke C."/>
            <person name="Frishman D."/>
            <person name="Haase D."/>
            <person name="Lemcke K."/>
            <person name="Mewes H.-W."/>
            <person name="Stocker S."/>
            <person name="Zaccaria P."/>
            <person name="Bevan M."/>
            <person name="Wilson R.K."/>
            <person name="de la Bastide M."/>
            <person name="Habermann K."/>
            <person name="Parnell L."/>
            <person name="Dedhia N."/>
            <person name="Gnoj L."/>
            <person name="Schutz K."/>
            <person name="Huang E."/>
            <person name="Spiegel L."/>
            <person name="Sekhon M."/>
            <person name="Murray J."/>
            <person name="Sheet P."/>
            <person name="Cordes M."/>
            <person name="Abu-Threideh J."/>
            <person name="Stoneking T."/>
            <person name="Kalicki J."/>
            <person name="Graves T."/>
            <person name="Harmon G."/>
            <person name="Edwards J."/>
            <person name="Latreille P."/>
            <person name="Courtney L."/>
            <person name="Cloud J."/>
            <person name="Abbott A."/>
            <person name="Scott K."/>
            <person name="Johnson D."/>
            <person name="Minx P."/>
            <person name="Bentley D."/>
            <person name="Fulton B."/>
            <person name="Miller N."/>
            <person name="Greco T."/>
            <person name="Kemp K."/>
            <person name="Kramer J."/>
            <person name="Fulton L."/>
            <person name="Mardis E."/>
            <person name="Dante M."/>
            <person name="Pepin K."/>
            <person name="Hillier L.W."/>
            <person name="Nelson J."/>
            <person name="Spieth J."/>
            <person name="Ryan E."/>
            <person name="Andrews S."/>
            <person name="Geisel C."/>
            <person name="Layman D."/>
            <person name="Du H."/>
            <person name="Ali J."/>
            <person name="Berghoff A."/>
            <person name="Jones K."/>
            <person name="Drone K."/>
            <person name="Cotton M."/>
            <person name="Joshu C."/>
            <person name="Antonoiu B."/>
            <person name="Zidanic M."/>
            <person name="Strong C."/>
            <person name="Sun H."/>
            <person name="Lamar B."/>
            <person name="Yordan C."/>
            <person name="Ma P."/>
            <person name="Zhong J."/>
            <person name="Preston R."/>
            <person name="Vil D."/>
            <person name="Shekher M."/>
            <person name="Matero A."/>
            <person name="Shah R."/>
            <person name="Swaby I.K."/>
            <person name="O'Shaughnessy A."/>
            <person name="Rodriguez M."/>
            <person name="Hoffman J."/>
            <person name="Till S."/>
            <person name="Granat S."/>
            <person name="Shohdy N."/>
            <person name="Hasegawa A."/>
            <person name="Hameed A."/>
            <person name="Lodhi M."/>
            <person name="Johnson A."/>
            <person name="Chen E."/>
            <person name="Marra M.A."/>
            <person name="Martienssen R."/>
            <person name="McCombie W.R."/>
        </authorList>
    </citation>
    <scope>NUCLEOTIDE SEQUENCE [LARGE SCALE GENOMIC DNA]</scope>
    <source>
        <strain>cv. Columbia</strain>
    </source>
</reference>
<reference key="4">
    <citation type="journal article" date="2017" name="Plant J.">
        <title>Araport11: a complete reannotation of the Arabidopsis thaliana reference genome.</title>
        <authorList>
            <person name="Cheng C.Y."/>
            <person name="Krishnakumar V."/>
            <person name="Chan A.P."/>
            <person name="Thibaud-Nissen F."/>
            <person name="Schobel S."/>
            <person name="Town C.D."/>
        </authorList>
    </citation>
    <scope>GENOME REANNOTATION</scope>
    <source>
        <strain>cv. Columbia</strain>
    </source>
</reference>
<reference key="5">
    <citation type="journal article" date="2003" name="Science">
        <title>Empirical analysis of transcriptional activity in the Arabidopsis genome.</title>
        <authorList>
            <person name="Yamada K."/>
            <person name="Lim J."/>
            <person name="Dale J.M."/>
            <person name="Chen H."/>
            <person name="Shinn P."/>
            <person name="Palm C.J."/>
            <person name="Southwick A.M."/>
            <person name="Wu H.C."/>
            <person name="Kim C.J."/>
            <person name="Nguyen M."/>
            <person name="Pham P.K."/>
            <person name="Cheuk R.F."/>
            <person name="Karlin-Newmann G."/>
            <person name="Liu S.X."/>
            <person name="Lam B."/>
            <person name="Sakano H."/>
            <person name="Wu T."/>
            <person name="Yu G."/>
            <person name="Miranda M."/>
            <person name="Quach H.L."/>
            <person name="Tripp M."/>
            <person name="Chang C.H."/>
            <person name="Lee J.M."/>
            <person name="Toriumi M.J."/>
            <person name="Chan M.M."/>
            <person name="Tang C.C."/>
            <person name="Onodera C.S."/>
            <person name="Deng J.M."/>
            <person name="Akiyama K."/>
            <person name="Ansari Y."/>
            <person name="Arakawa T."/>
            <person name="Banh J."/>
            <person name="Banno F."/>
            <person name="Bowser L."/>
            <person name="Brooks S.Y."/>
            <person name="Carninci P."/>
            <person name="Chao Q."/>
            <person name="Choy N."/>
            <person name="Enju A."/>
            <person name="Goldsmith A.D."/>
            <person name="Gurjal M."/>
            <person name="Hansen N.F."/>
            <person name="Hayashizaki Y."/>
            <person name="Johnson-Hopson C."/>
            <person name="Hsuan V.W."/>
            <person name="Iida K."/>
            <person name="Karnes M."/>
            <person name="Khan S."/>
            <person name="Koesema E."/>
            <person name="Ishida J."/>
            <person name="Jiang P.X."/>
            <person name="Jones T."/>
            <person name="Kawai J."/>
            <person name="Kamiya A."/>
            <person name="Meyers C."/>
            <person name="Nakajima M."/>
            <person name="Narusaka M."/>
            <person name="Seki M."/>
            <person name="Sakurai T."/>
            <person name="Satou M."/>
            <person name="Tamse R."/>
            <person name="Vaysberg M."/>
            <person name="Wallender E.K."/>
            <person name="Wong C."/>
            <person name="Yamamura Y."/>
            <person name="Yuan S."/>
            <person name="Shinozaki K."/>
            <person name="Davis R.W."/>
            <person name="Theologis A."/>
            <person name="Ecker J.R."/>
        </authorList>
    </citation>
    <scope>NUCLEOTIDE SEQUENCE [LARGE SCALE MRNA]</scope>
    <source>
        <strain>cv. Columbia</strain>
    </source>
</reference>
<reference key="6">
    <citation type="journal article" date="1993" name="Plant J.">
        <title>An inventory of 1152 expressed sequence tags obtained by partial sequencing of cDNAs from Arabidopsis thaliana.</title>
        <authorList>
            <person name="Hoefte H."/>
            <person name="Desprez T."/>
            <person name="Amselem J."/>
            <person name="Chiapello H."/>
            <person name="Rouze P."/>
            <person name="Caboche M."/>
            <person name="Moisan A."/>
            <person name="Jourjon M.-F."/>
            <person name="Charpenteau J.-L."/>
            <person name="Berthomieu P."/>
            <person name="Guerrier D."/>
            <person name="Giraudat J."/>
            <person name="Quigley F."/>
            <person name="Thomas F."/>
            <person name="Yu D.-Y."/>
            <person name="Mache R."/>
            <person name="Raynal M."/>
            <person name="Cooke R."/>
            <person name="Grellet F."/>
            <person name="Delseny M."/>
            <person name="Parmentier Y."/>
            <person name="de Marcillac G."/>
            <person name="Gigot C."/>
            <person name="Fleck J."/>
            <person name="Philipps G."/>
            <person name="Axelos M."/>
            <person name="Bardet C."/>
            <person name="Tremousaygue D."/>
            <person name="Lescure B."/>
        </authorList>
    </citation>
    <scope>NUCLEOTIDE SEQUENCE [LARGE SCALE MRNA] OF 1-90 AND 118-170</scope>
    <source>
        <strain>cv. Columbia</strain>
        <tissue>Green siliques</tissue>
    </source>
</reference>
<name>2SS2_ARATH</name>
<organism>
    <name type="scientific">Arabidopsis thaliana</name>
    <name type="common">Mouse-ear cress</name>
    <dbReference type="NCBI Taxonomy" id="3702"/>
    <lineage>
        <taxon>Eukaryota</taxon>
        <taxon>Viridiplantae</taxon>
        <taxon>Streptophyta</taxon>
        <taxon>Embryophyta</taxon>
        <taxon>Tracheophyta</taxon>
        <taxon>Spermatophyta</taxon>
        <taxon>Magnoliopsida</taxon>
        <taxon>eudicotyledons</taxon>
        <taxon>Gunneridae</taxon>
        <taxon>Pentapetalae</taxon>
        <taxon>rosids</taxon>
        <taxon>malvids</taxon>
        <taxon>Brassicales</taxon>
        <taxon>Brassicaceae</taxon>
        <taxon>Camelineae</taxon>
        <taxon>Arabidopsis</taxon>
    </lineage>
</organism>
<evidence type="ECO:0000250" key="1"/>
<evidence type="ECO:0000305" key="2"/>
<dbReference type="EMBL" id="AH001334">
    <property type="protein sequence ID" value="AAA32744.1"/>
    <property type="molecule type" value="Genomic_DNA"/>
</dbReference>
<dbReference type="EMBL" id="Z24745">
    <property type="protein sequence ID" value="CAA80871.1"/>
    <property type="molecule type" value="Genomic_DNA"/>
</dbReference>
<dbReference type="EMBL" id="AL035680">
    <property type="protein sequence ID" value="CAB38845.1"/>
    <property type="molecule type" value="Genomic_DNA"/>
</dbReference>
<dbReference type="EMBL" id="AL161566">
    <property type="protein sequence ID" value="CAB79570.1"/>
    <property type="molecule type" value="Genomic_DNA"/>
</dbReference>
<dbReference type="EMBL" id="CP002687">
    <property type="protein sequence ID" value="AEE85307.1"/>
    <property type="molecule type" value="Genomic_DNA"/>
</dbReference>
<dbReference type="EMBL" id="BT002073">
    <property type="protein sequence ID" value="AAN72084.1"/>
    <property type="molecule type" value="mRNA"/>
</dbReference>
<dbReference type="EMBL" id="BT006557">
    <property type="protein sequence ID" value="AAP21365.1"/>
    <property type="molecule type" value="mRNA"/>
</dbReference>
<dbReference type="EMBL" id="Z17598">
    <property type="protein sequence ID" value="CAA79010.1"/>
    <property type="molecule type" value="mRNA"/>
</dbReference>
<dbReference type="EMBL" id="Z17594">
    <property type="protein sequence ID" value="CAA79008.1"/>
    <property type="molecule type" value="mRNA"/>
</dbReference>
<dbReference type="PIR" id="JA0162">
    <property type="entry name" value="NWMU2"/>
</dbReference>
<dbReference type="RefSeq" id="NP_194445.1">
    <property type="nucleotide sequence ID" value="NM_118849.2"/>
</dbReference>
<dbReference type="SMR" id="P15458"/>
<dbReference type="FunCoup" id="P15458">
    <property type="interactions" value="85"/>
</dbReference>
<dbReference type="STRING" id="3702.P15458"/>
<dbReference type="PaxDb" id="3702-AT4G27150.1"/>
<dbReference type="ProteomicsDB" id="245159"/>
<dbReference type="EnsemblPlants" id="AT4G27150.1">
    <property type="protein sequence ID" value="AT4G27150.1"/>
    <property type="gene ID" value="AT4G27150"/>
</dbReference>
<dbReference type="GeneID" id="828823"/>
<dbReference type="Gramene" id="AT4G27150.1">
    <property type="protein sequence ID" value="AT4G27150.1"/>
    <property type="gene ID" value="AT4G27150"/>
</dbReference>
<dbReference type="KEGG" id="ath:AT4G27150"/>
<dbReference type="Araport" id="AT4G27150"/>
<dbReference type="TAIR" id="AT4G27150">
    <property type="gene designation" value="SESA2"/>
</dbReference>
<dbReference type="eggNOG" id="ENOG502S7EV">
    <property type="taxonomic scope" value="Eukaryota"/>
</dbReference>
<dbReference type="HOGENOM" id="CLU_131213_1_0_1"/>
<dbReference type="InParanoid" id="P15458"/>
<dbReference type="OMA" id="CCDELEN"/>
<dbReference type="OrthoDB" id="10304656at2759"/>
<dbReference type="PhylomeDB" id="P15458"/>
<dbReference type="PRO" id="PR:P15458"/>
<dbReference type="Proteomes" id="UP000006548">
    <property type="component" value="Chromosome 4"/>
</dbReference>
<dbReference type="ExpressionAtlas" id="P15458">
    <property type="expression patterns" value="baseline and differential"/>
</dbReference>
<dbReference type="GO" id="GO:0045735">
    <property type="term" value="F:nutrient reservoir activity"/>
    <property type="evidence" value="ECO:0007669"/>
    <property type="project" value="UniProtKB-KW"/>
</dbReference>
<dbReference type="CDD" id="cd00261">
    <property type="entry name" value="AAI_SS"/>
    <property type="match status" value="1"/>
</dbReference>
<dbReference type="Gene3D" id="1.10.110.10">
    <property type="entry name" value="Plant lipid-transfer and hydrophobic proteins"/>
    <property type="match status" value="1"/>
</dbReference>
<dbReference type="InterPro" id="IPR036312">
    <property type="entry name" value="Bifun_inhib/LTP/seed_sf"/>
</dbReference>
<dbReference type="InterPro" id="IPR016140">
    <property type="entry name" value="Bifunc_inhib/LTP/seed_store"/>
</dbReference>
<dbReference type="InterPro" id="IPR000617">
    <property type="entry name" value="Napin/2SS/CON"/>
</dbReference>
<dbReference type="PANTHER" id="PTHR35496">
    <property type="entry name" value="2S SEED STORAGE PROTEIN 1-RELATED"/>
    <property type="match status" value="1"/>
</dbReference>
<dbReference type="PANTHER" id="PTHR35496:SF20">
    <property type="entry name" value="2S SEED STORAGE PROTEIN 1-RELATED"/>
    <property type="match status" value="1"/>
</dbReference>
<dbReference type="Pfam" id="PF00234">
    <property type="entry name" value="Tryp_alpha_amyl"/>
    <property type="match status" value="1"/>
</dbReference>
<dbReference type="PRINTS" id="PR00496">
    <property type="entry name" value="NAPIN"/>
</dbReference>
<dbReference type="SMART" id="SM00499">
    <property type="entry name" value="AAI"/>
    <property type="match status" value="1"/>
</dbReference>
<dbReference type="SUPFAM" id="SSF47699">
    <property type="entry name" value="Bifunctional inhibitor/lipid-transfer protein/seed storage 2S albumin"/>
    <property type="match status" value="1"/>
</dbReference>
<proteinExistence type="evidence at transcript level"/>
<keyword id="KW-1015">Disulfide bond</keyword>
<keyword id="KW-1185">Reference proteome</keyword>
<keyword id="KW-0708">Seed storage protein</keyword>
<keyword id="KW-0732">Signal</keyword>
<keyword id="KW-0758">Storage protein</keyword>
<sequence>MANKLFLVCATFALCFLLTNASIYRTVVEFDEDDASNPMGPRQKCQKEFQQSQHLRACQKLMRMQMRQGRGGGPSLDDEFDLEDDIENPQGPQQGHQILQQCCSELRQEEPVCVCPTLRQAARAVSLQGQHGPFQSRKIYKTAKYLPNICKIQQVGECPFQTTIPFFPPY</sequence>
<comment type="function">
    <text>This is a 2S seed storage protein.</text>
</comment>
<comment type="subunit">
    <text>The mature protein consists of a small and a large chain linked by disulfide bonds.</text>
</comment>
<comment type="similarity">
    <text evidence="2">Belongs to the 2S seed storage albumins family.</text>
</comment>